<sequence>MARIAGINIPDQKHTVIALTAIFGIGRTRARAICAATAIAETAKIKELSEAQIDILREEVAKYIVEGDLRREISMNIKRLMDLGCYRGLRHRRSLPLRGQRTKTNARTRKGPRKPIRK</sequence>
<protein>
    <recommendedName>
        <fullName evidence="1">Small ribosomal subunit protein uS13</fullName>
    </recommendedName>
    <alternativeName>
        <fullName evidence="3">30S ribosomal protein S13</fullName>
    </alternativeName>
</protein>
<proteinExistence type="inferred from homology"/>
<dbReference type="EMBL" id="CP001252">
    <property type="protein sequence ID" value="ACK48507.1"/>
    <property type="molecule type" value="Genomic_DNA"/>
</dbReference>
<dbReference type="RefSeq" id="WP_006083578.1">
    <property type="nucleotide sequence ID" value="NC_011663.1"/>
</dbReference>
<dbReference type="SMR" id="B8EBI3"/>
<dbReference type="GeneID" id="11770577"/>
<dbReference type="KEGG" id="sbp:Sbal223_4034"/>
<dbReference type="HOGENOM" id="CLU_103849_1_2_6"/>
<dbReference type="Proteomes" id="UP000002507">
    <property type="component" value="Chromosome"/>
</dbReference>
<dbReference type="GO" id="GO:0005829">
    <property type="term" value="C:cytosol"/>
    <property type="evidence" value="ECO:0007669"/>
    <property type="project" value="TreeGrafter"/>
</dbReference>
<dbReference type="GO" id="GO:0015935">
    <property type="term" value="C:small ribosomal subunit"/>
    <property type="evidence" value="ECO:0007669"/>
    <property type="project" value="TreeGrafter"/>
</dbReference>
<dbReference type="GO" id="GO:0019843">
    <property type="term" value="F:rRNA binding"/>
    <property type="evidence" value="ECO:0007669"/>
    <property type="project" value="UniProtKB-UniRule"/>
</dbReference>
<dbReference type="GO" id="GO:0003735">
    <property type="term" value="F:structural constituent of ribosome"/>
    <property type="evidence" value="ECO:0007669"/>
    <property type="project" value="InterPro"/>
</dbReference>
<dbReference type="GO" id="GO:0000049">
    <property type="term" value="F:tRNA binding"/>
    <property type="evidence" value="ECO:0007669"/>
    <property type="project" value="UniProtKB-UniRule"/>
</dbReference>
<dbReference type="GO" id="GO:0006412">
    <property type="term" value="P:translation"/>
    <property type="evidence" value="ECO:0007669"/>
    <property type="project" value="UniProtKB-UniRule"/>
</dbReference>
<dbReference type="FunFam" id="1.10.8.50:FF:000001">
    <property type="entry name" value="30S ribosomal protein S13"/>
    <property type="match status" value="1"/>
</dbReference>
<dbReference type="FunFam" id="4.10.910.10:FF:000001">
    <property type="entry name" value="30S ribosomal protein S13"/>
    <property type="match status" value="1"/>
</dbReference>
<dbReference type="Gene3D" id="1.10.8.50">
    <property type="match status" value="1"/>
</dbReference>
<dbReference type="Gene3D" id="4.10.910.10">
    <property type="entry name" value="30s ribosomal protein s13, domain 2"/>
    <property type="match status" value="1"/>
</dbReference>
<dbReference type="HAMAP" id="MF_01315">
    <property type="entry name" value="Ribosomal_uS13"/>
    <property type="match status" value="1"/>
</dbReference>
<dbReference type="InterPro" id="IPR027437">
    <property type="entry name" value="Rbsml_uS13_C"/>
</dbReference>
<dbReference type="InterPro" id="IPR001892">
    <property type="entry name" value="Ribosomal_uS13"/>
</dbReference>
<dbReference type="InterPro" id="IPR010979">
    <property type="entry name" value="Ribosomal_uS13-like_H2TH"/>
</dbReference>
<dbReference type="InterPro" id="IPR019980">
    <property type="entry name" value="Ribosomal_uS13_bac-type"/>
</dbReference>
<dbReference type="InterPro" id="IPR018269">
    <property type="entry name" value="Ribosomal_uS13_CS"/>
</dbReference>
<dbReference type="NCBIfam" id="TIGR03631">
    <property type="entry name" value="uS13_bact"/>
    <property type="match status" value="1"/>
</dbReference>
<dbReference type="PANTHER" id="PTHR10871">
    <property type="entry name" value="30S RIBOSOMAL PROTEIN S13/40S RIBOSOMAL PROTEIN S18"/>
    <property type="match status" value="1"/>
</dbReference>
<dbReference type="PANTHER" id="PTHR10871:SF1">
    <property type="entry name" value="SMALL RIBOSOMAL SUBUNIT PROTEIN US13M"/>
    <property type="match status" value="1"/>
</dbReference>
<dbReference type="Pfam" id="PF00416">
    <property type="entry name" value="Ribosomal_S13"/>
    <property type="match status" value="1"/>
</dbReference>
<dbReference type="PIRSF" id="PIRSF002134">
    <property type="entry name" value="Ribosomal_S13"/>
    <property type="match status" value="1"/>
</dbReference>
<dbReference type="SUPFAM" id="SSF46946">
    <property type="entry name" value="S13-like H2TH domain"/>
    <property type="match status" value="1"/>
</dbReference>
<dbReference type="PROSITE" id="PS00646">
    <property type="entry name" value="RIBOSOMAL_S13_1"/>
    <property type="match status" value="1"/>
</dbReference>
<dbReference type="PROSITE" id="PS50159">
    <property type="entry name" value="RIBOSOMAL_S13_2"/>
    <property type="match status" value="1"/>
</dbReference>
<accession>B8EBI3</accession>
<organism>
    <name type="scientific">Shewanella baltica (strain OS223)</name>
    <dbReference type="NCBI Taxonomy" id="407976"/>
    <lineage>
        <taxon>Bacteria</taxon>
        <taxon>Pseudomonadati</taxon>
        <taxon>Pseudomonadota</taxon>
        <taxon>Gammaproteobacteria</taxon>
        <taxon>Alteromonadales</taxon>
        <taxon>Shewanellaceae</taxon>
        <taxon>Shewanella</taxon>
    </lineage>
</organism>
<gene>
    <name evidence="1" type="primary">rpsM</name>
    <name type="ordered locus">Sbal223_4034</name>
</gene>
<feature type="chain" id="PRO_1000165636" description="Small ribosomal subunit protein uS13">
    <location>
        <begin position="1"/>
        <end position="118"/>
    </location>
</feature>
<feature type="region of interest" description="Disordered" evidence="2">
    <location>
        <begin position="94"/>
        <end position="118"/>
    </location>
</feature>
<keyword id="KW-0687">Ribonucleoprotein</keyword>
<keyword id="KW-0689">Ribosomal protein</keyword>
<keyword id="KW-0694">RNA-binding</keyword>
<keyword id="KW-0699">rRNA-binding</keyword>
<keyword id="KW-0820">tRNA-binding</keyword>
<name>RS13_SHEB2</name>
<reference key="1">
    <citation type="submission" date="2008-12" db="EMBL/GenBank/DDBJ databases">
        <title>Complete sequence of chromosome of Shewanella baltica OS223.</title>
        <authorList>
            <consortium name="US DOE Joint Genome Institute"/>
            <person name="Lucas S."/>
            <person name="Copeland A."/>
            <person name="Lapidus A."/>
            <person name="Glavina del Rio T."/>
            <person name="Dalin E."/>
            <person name="Tice H."/>
            <person name="Bruce D."/>
            <person name="Goodwin L."/>
            <person name="Pitluck S."/>
            <person name="Chertkov O."/>
            <person name="Meincke L."/>
            <person name="Brettin T."/>
            <person name="Detter J.C."/>
            <person name="Han C."/>
            <person name="Kuske C.R."/>
            <person name="Larimer F."/>
            <person name="Land M."/>
            <person name="Hauser L."/>
            <person name="Kyrpides N."/>
            <person name="Ovchinnikova G."/>
            <person name="Brettar I."/>
            <person name="Rodrigues J."/>
            <person name="Konstantinidis K."/>
            <person name="Tiedje J."/>
        </authorList>
    </citation>
    <scope>NUCLEOTIDE SEQUENCE [LARGE SCALE GENOMIC DNA]</scope>
    <source>
        <strain>OS223</strain>
    </source>
</reference>
<evidence type="ECO:0000255" key="1">
    <source>
        <dbReference type="HAMAP-Rule" id="MF_01315"/>
    </source>
</evidence>
<evidence type="ECO:0000256" key="2">
    <source>
        <dbReference type="SAM" id="MobiDB-lite"/>
    </source>
</evidence>
<evidence type="ECO:0000305" key="3"/>
<comment type="function">
    <text evidence="1">Located at the top of the head of the 30S subunit, it contacts several helices of the 16S rRNA. In the 70S ribosome it contacts the 23S rRNA (bridge B1a) and protein L5 of the 50S subunit (bridge B1b), connecting the 2 subunits; these bridges are implicated in subunit movement. Contacts the tRNAs in the A and P-sites.</text>
</comment>
<comment type="subunit">
    <text evidence="1">Part of the 30S ribosomal subunit. Forms a loose heterodimer with protein S19. Forms two bridges to the 50S subunit in the 70S ribosome.</text>
</comment>
<comment type="similarity">
    <text evidence="1">Belongs to the universal ribosomal protein uS13 family.</text>
</comment>